<accession>Q7WKH5</accession>
<sequence>MQAFTQHEGLVAPLDRENVDTDLIIPKQFLKSIKRAGFGPNLFDELRYLDHGEPGMDNSKRPLNPDFVLNQPRYQGASVLLARKNFGCGSSREHAPWALTQYGFRAIIAPSYADIFFNNSFKNGLLPIVLGELEVARLFDEVKAFPGFKLNIDLERQVVIAPDGRELGFDIEPFRKYCLLNGLDDIGLTLRQADKIRAFEAERLARHPWLESRPVA</sequence>
<protein>
    <recommendedName>
        <fullName evidence="1">3-isopropylmalate dehydratase small subunit 1</fullName>
        <ecNumber evidence="1">4.2.1.33</ecNumber>
    </recommendedName>
    <alternativeName>
        <fullName evidence="1">Alpha-IPM isomerase 1</fullName>
        <shortName evidence="1">IPMI 1</shortName>
    </alternativeName>
    <alternativeName>
        <fullName evidence="1">Isopropylmalate isomerase 1</fullName>
    </alternativeName>
</protein>
<name>LEUD1_BORBR</name>
<feature type="chain" id="PRO_0000141788" description="3-isopropylmalate dehydratase small subunit 1">
    <location>
        <begin position="1"/>
        <end position="216"/>
    </location>
</feature>
<dbReference type="EC" id="4.2.1.33" evidence="1"/>
<dbReference type="EMBL" id="BX640443">
    <property type="protein sequence ID" value="CAE32627.1"/>
    <property type="status" value="ALT_INIT"/>
    <property type="molecule type" value="Genomic_DNA"/>
</dbReference>
<dbReference type="SMR" id="Q7WKH5"/>
<dbReference type="KEGG" id="bbr:BB2131"/>
<dbReference type="eggNOG" id="COG0066">
    <property type="taxonomic scope" value="Bacteria"/>
</dbReference>
<dbReference type="HOGENOM" id="CLU_081378_0_3_4"/>
<dbReference type="UniPathway" id="UPA00048">
    <property type="reaction ID" value="UER00071"/>
</dbReference>
<dbReference type="Proteomes" id="UP000001027">
    <property type="component" value="Chromosome"/>
</dbReference>
<dbReference type="GO" id="GO:0009316">
    <property type="term" value="C:3-isopropylmalate dehydratase complex"/>
    <property type="evidence" value="ECO:0007669"/>
    <property type="project" value="InterPro"/>
</dbReference>
<dbReference type="GO" id="GO:0003861">
    <property type="term" value="F:3-isopropylmalate dehydratase activity"/>
    <property type="evidence" value="ECO:0007669"/>
    <property type="project" value="UniProtKB-UniRule"/>
</dbReference>
<dbReference type="GO" id="GO:0009098">
    <property type="term" value="P:L-leucine biosynthetic process"/>
    <property type="evidence" value="ECO:0007669"/>
    <property type="project" value="UniProtKB-UniRule"/>
</dbReference>
<dbReference type="CDD" id="cd01577">
    <property type="entry name" value="IPMI_Swivel"/>
    <property type="match status" value="1"/>
</dbReference>
<dbReference type="FunFam" id="3.20.19.10:FF:000003">
    <property type="entry name" value="3-isopropylmalate dehydratase small subunit"/>
    <property type="match status" value="1"/>
</dbReference>
<dbReference type="Gene3D" id="3.20.19.10">
    <property type="entry name" value="Aconitase, domain 4"/>
    <property type="match status" value="1"/>
</dbReference>
<dbReference type="HAMAP" id="MF_01031">
    <property type="entry name" value="LeuD_type1"/>
    <property type="match status" value="1"/>
</dbReference>
<dbReference type="InterPro" id="IPR004431">
    <property type="entry name" value="3-IsopropMal_deHydase_ssu"/>
</dbReference>
<dbReference type="InterPro" id="IPR015928">
    <property type="entry name" value="Aconitase/3IPM_dehydase_swvl"/>
</dbReference>
<dbReference type="InterPro" id="IPR000573">
    <property type="entry name" value="AconitaseA/IPMdHydase_ssu_swvl"/>
</dbReference>
<dbReference type="InterPro" id="IPR033940">
    <property type="entry name" value="IPMI_Swivel"/>
</dbReference>
<dbReference type="InterPro" id="IPR050075">
    <property type="entry name" value="LeuD"/>
</dbReference>
<dbReference type="NCBIfam" id="TIGR00171">
    <property type="entry name" value="leuD"/>
    <property type="match status" value="1"/>
</dbReference>
<dbReference type="NCBIfam" id="NF002458">
    <property type="entry name" value="PRK01641.1"/>
    <property type="match status" value="1"/>
</dbReference>
<dbReference type="PANTHER" id="PTHR43345:SF5">
    <property type="entry name" value="3-ISOPROPYLMALATE DEHYDRATASE SMALL SUBUNIT"/>
    <property type="match status" value="1"/>
</dbReference>
<dbReference type="PANTHER" id="PTHR43345">
    <property type="entry name" value="3-ISOPROPYLMALATE DEHYDRATASE SMALL SUBUNIT 2-RELATED-RELATED"/>
    <property type="match status" value="1"/>
</dbReference>
<dbReference type="Pfam" id="PF00694">
    <property type="entry name" value="Aconitase_C"/>
    <property type="match status" value="1"/>
</dbReference>
<dbReference type="SUPFAM" id="SSF52016">
    <property type="entry name" value="LeuD/IlvD-like"/>
    <property type="match status" value="1"/>
</dbReference>
<proteinExistence type="inferred from homology"/>
<organism>
    <name type="scientific">Bordetella bronchiseptica (strain ATCC BAA-588 / NCTC 13252 / RB50)</name>
    <name type="common">Alcaligenes bronchisepticus</name>
    <dbReference type="NCBI Taxonomy" id="257310"/>
    <lineage>
        <taxon>Bacteria</taxon>
        <taxon>Pseudomonadati</taxon>
        <taxon>Pseudomonadota</taxon>
        <taxon>Betaproteobacteria</taxon>
        <taxon>Burkholderiales</taxon>
        <taxon>Alcaligenaceae</taxon>
        <taxon>Bordetella</taxon>
    </lineage>
</organism>
<reference key="1">
    <citation type="journal article" date="2003" name="Nat. Genet.">
        <title>Comparative analysis of the genome sequences of Bordetella pertussis, Bordetella parapertussis and Bordetella bronchiseptica.</title>
        <authorList>
            <person name="Parkhill J."/>
            <person name="Sebaihia M."/>
            <person name="Preston A."/>
            <person name="Murphy L.D."/>
            <person name="Thomson N.R."/>
            <person name="Harris D.E."/>
            <person name="Holden M.T.G."/>
            <person name="Churcher C.M."/>
            <person name="Bentley S.D."/>
            <person name="Mungall K.L."/>
            <person name="Cerdeno-Tarraga A.-M."/>
            <person name="Temple L."/>
            <person name="James K.D."/>
            <person name="Harris B."/>
            <person name="Quail M.A."/>
            <person name="Achtman M."/>
            <person name="Atkin R."/>
            <person name="Baker S."/>
            <person name="Basham D."/>
            <person name="Bason N."/>
            <person name="Cherevach I."/>
            <person name="Chillingworth T."/>
            <person name="Collins M."/>
            <person name="Cronin A."/>
            <person name="Davis P."/>
            <person name="Doggett J."/>
            <person name="Feltwell T."/>
            <person name="Goble A."/>
            <person name="Hamlin N."/>
            <person name="Hauser H."/>
            <person name="Holroyd S."/>
            <person name="Jagels K."/>
            <person name="Leather S."/>
            <person name="Moule S."/>
            <person name="Norberczak H."/>
            <person name="O'Neil S."/>
            <person name="Ormond D."/>
            <person name="Price C."/>
            <person name="Rabbinowitsch E."/>
            <person name="Rutter S."/>
            <person name="Sanders M."/>
            <person name="Saunders D."/>
            <person name="Seeger K."/>
            <person name="Sharp S."/>
            <person name="Simmonds M."/>
            <person name="Skelton J."/>
            <person name="Squares R."/>
            <person name="Squares S."/>
            <person name="Stevens K."/>
            <person name="Unwin L."/>
            <person name="Whitehead S."/>
            <person name="Barrell B.G."/>
            <person name="Maskell D.J."/>
        </authorList>
    </citation>
    <scope>NUCLEOTIDE SEQUENCE [LARGE SCALE GENOMIC DNA]</scope>
    <source>
        <strain>ATCC BAA-588 / NCTC 13252 / RB50</strain>
    </source>
</reference>
<gene>
    <name evidence="1" type="primary">leuD1</name>
    <name type="ordered locus">BB2131</name>
</gene>
<evidence type="ECO:0000255" key="1">
    <source>
        <dbReference type="HAMAP-Rule" id="MF_01031"/>
    </source>
</evidence>
<evidence type="ECO:0000305" key="2"/>
<comment type="function">
    <text evidence="1">Catalyzes the isomerization between 2-isopropylmalate and 3-isopropylmalate, via the formation of 2-isopropylmaleate.</text>
</comment>
<comment type="catalytic activity">
    <reaction evidence="1">
        <text>(2R,3S)-3-isopropylmalate = (2S)-2-isopropylmalate</text>
        <dbReference type="Rhea" id="RHEA:32287"/>
        <dbReference type="ChEBI" id="CHEBI:1178"/>
        <dbReference type="ChEBI" id="CHEBI:35121"/>
        <dbReference type="EC" id="4.2.1.33"/>
    </reaction>
</comment>
<comment type="pathway">
    <text evidence="1">Amino-acid biosynthesis; L-leucine biosynthesis; L-leucine from 3-methyl-2-oxobutanoate: step 2/4.</text>
</comment>
<comment type="subunit">
    <text evidence="1">Heterodimer of LeuC and LeuD.</text>
</comment>
<comment type="similarity">
    <text evidence="1">Belongs to the LeuD family. LeuD type 1 subfamily.</text>
</comment>
<comment type="sequence caution" evidence="2">
    <conflict type="erroneous initiation">
        <sequence resource="EMBL-CDS" id="CAE32627"/>
    </conflict>
</comment>
<keyword id="KW-0028">Amino-acid biosynthesis</keyword>
<keyword id="KW-0100">Branched-chain amino acid biosynthesis</keyword>
<keyword id="KW-0432">Leucine biosynthesis</keyword>
<keyword id="KW-0456">Lyase</keyword>